<feature type="chain" id="PRO_0000230345" description="Small ribosomal subunit protein uS5">
    <location>
        <begin position="1"/>
        <end position="174"/>
    </location>
</feature>
<feature type="domain" description="S5 DRBM" evidence="1">
    <location>
        <begin position="16"/>
        <end position="79"/>
    </location>
</feature>
<accession>Q3YRM6</accession>
<comment type="function">
    <text evidence="1">With S4 and S12 plays an important role in translational accuracy.</text>
</comment>
<comment type="function">
    <text evidence="1">Located at the back of the 30S subunit body where it stabilizes the conformation of the head with respect to the body.</text>
</comment>
<comment type="subunit">
    <text evidence="1">Part of the 30S ribosomal subunit. Contacts proteins S4 and S8.</text>
</comment>
<comment type="domain">
    <text>The N-terminal domain interacts with the head of the 30S subunit; the C-terminal domain interacts with the body and contacts protein S4. The interaction surface between S4 and S5 is involved in control of translational fidelity.</text>
</comment>
<comment type="similarity">
    <text evidence="1">Belongs to the universal ribosomal protein uS5 family.</text>
</comment>
<name>RS5_EHRCJ</name>
<evidence type="ECO:0000255" key="1">
    <source>
        <dbReference type="HAMAP-Rule" id="MF_01307"/>
    </source>
</evidence>
<evidence type="ECO:0000305" key="2"/>
<organism>
    <name type="scientific">Ehrlichia canis (strain Jake)</name>
    <dbReference type="NCBI Taxonomy" id="269484"/>
    <lineage>
        <taxon>Bacteria</taxon>
        <taxon>Pseudomonadati</taxon>
        <taxon>Pseudomonadota</taxon>
        <taxon>Alphaproteobacteria</taxon>
        <taxon>Rickettsiales</taxon>
        <taxon>Anaplasmataceae</taxon>
        <taxon>Ehrlichia</taxon>
    </lineage>
</organism>
<protein>
    <recommendedName>
        <fullName evidence="1">Small ribosomal subunit protein uS5</fullName>
    </recommendedName>
    <alternativeName>
        <fullName evidence="2">30S ribosomal protein S5</fullName>
    </alternativeName>
</protein>
<sequence length="174" mass="18928">MDVVKKSRNVHGANDFSELIVSVRRVAKVVKGGRRFSFSVLVVIGDEKGKVGCGIGKHLEVSEAKVKAVNAAKKNMIRVHLRESRTLHHDVKAKFCASKVMLRSAKVGTGIIAGGSIRLIFEVLGVQDVVAKSIGSSNPHNVVYAVFAAFKKMLSPKQVANKRSRKIGDIIENR</sequence>
<dbReference type="EMBL" id="CP000107">
    <property type="protein sequence ID" value="AAZ68629.1"/>
    <property type="molecule type" value="Genomic_DNA"/>
</dbReference>
<dbReference type="RefSeq" id="WP_011304707.1">
    <property type="nucleotide sequence ID" value="NC_007354.1"/>
</dbReference>
<dbReference type="SMR" id="Q3YRM6"/>
<dbReference type="FunCoup" id="Q3YRM6">
    <property type="interactions" value="365"/>
</dbReference>
<dbReference type="STRING" id="269484.Ecaj_0595"/>
<dbReference type="KEGG" id="ecn:Ecaj_0595"/>
<dbReference type="eggNOG" id="COG0098">
    <property type="taxonomic scope" value="Bacteria"/>
</dbReference>
<dbReference type="HOGENOM" id="CLU_065898_2_2_5"/>
<dbReference type="InParanoid" id="Q3YRM6"/>
<dbReference type="Proteomes" id="UP000000435">
    <property type="component" value="Chromosome"/>
</dbReference>
<dbReference type="GO" id="GO:0015935">
    <property type="term" value="C:small ribosomal subunit"/>
    <property type="evidence" value="ECO:0007669"/>
    <property type="project" value="InterPro"/>
</dbReference>
<dbReference type="GO" id="GO:0019843">
    <property type="term" value="F:rRNA binding"/>
    <property type="evidence" value="ECO:0007669"/>
    <property type="project" value="UniProtKB-UniRule"/>
</dbReference>
<dbReference type="GO" id="GO:0003735">
    <property type="term" value="F:structural constituent of ribosome"/>
    <property type="evidence" value="ECO:0007669"/>
    <property type="project" value="InterPro"/>
</dbReference>
<dbReference type="GO" id="GO:0006412">
    <property type="term" value="P:translation"/>
    <property type="evidence" value="ECO:0007669"/>
    <property type="project" value="UniProtKB-UniRule"/>
</dbReference>
<dbReference type="FunFam" id="3.30.230.10:FF:000002">
    <property type="entry name" value="30S ribosomal protein S5"/>
    <property type="match status" value="1"/>
</dbReference>
<dbReference type="Gene3D" id="3.30.160.20">
    <property type="match status" value="1"/>
</dbReference>
<dbReference type="Gene3D" id="3.30.230.10">
    <property type="match status" value="1"/>
</dbReference>
<dbReference type="HAMAP" id="MF_01307_B">
    <property type="entry name" value="Ribosomal_uS5_B"/>
    <property type="match status" value="1"/>
</dbReference>
<dbReference type="InterPro" id="IPR020568">
    <property type="entry name" value="Ribosomal_Su5_D2-typ_SF"/>
</dbReference>
<dbReference type="InterPro" id="IPR000851">
    <property type="entry name" value="Ribosomal_uS5"/>
</dbReference>
<dbReference type="InterPro" id="IPR005712">
    <property type="entry name" value="Ribosomal_uS5_bac-type"/>
</dbReference>
<dbReference type="InterPro" id="IPR005324">
    <property type="entry name" value="Ribosomal_uS5_C"/>
</dbReference>
<dbReference type="InterPro" id="IPR013810">
    <property type="entry name" value="Ribosomal_uS5_N"/>
</dbReference>
<dbReference type="InterPro" id="IPR014721">
    <property type="entry name" value="Ribsml_uS5_D2-typ_fold_subgr"/>
</dbReference>
<dbReference type="NCBIfam" id="TIGR01021">
    <property type="entry name" value="rpsE_bact"/>
    <property type="match status" value="1"/>
</dbReference>
<dbReference type="PANTHER" id="PTHR48277">
    <property type="entry name" value="MITOCHONDRIAL RIBOSOMAL PROTEIN S5"/>
    <property type="match status" value="1"/>
</dbReference>
<dbReference type="PANTHER" id="PTHR48277:SF1">
    <property type="entry name" value="MITOCHONDRIAL RIBOSOMAL PROTEIN S5"/>
    <property type="match status" value="1"/>
</dbReference>
<dbReference type="Pfam" id="PF00333">
    <property type="entry name" value="Ribosomal_S5"/>
    <property type="match status" value="1"/>
</dbReference>
<dbReference type="Pfam" id="PF03719">
    <property type="entry name" value="Ribosomal_S5_C"/>
    <property type="match status" value="1"/>
</dbReference>
<dbReference type="SUPFAM" id="SSF54768">
    <property type="entry name" value="dsRNA-binding domain-like"/>
    <property type="match status" value="1"/>
</dbReference>
<dbReference type="SUPFAM" id="SSF54211">
    <property type="entry name" value="Ribosomal protein S5 domain 2-like"/>
    <property type="match status" value="1"/>
</dbReference>
<dbReference type="PROSITE" id="PS50881">
    <property type="entry name" value="S5_DSRBD"/>
    <property type="match status" value="1"/>
</dbReference>
<keyword id="KW-0687">Ribonucleoprotein</keyword>
<keyword id="KW-0689">Ribosomal protein</keyword>
<keyword id="KW-0694">RNA-binding</keyword>
<keyword id="KW-0699">rRNA-binding</keyword>
<reference key="1">
    <citation type="journal article" date="2006" name="J. Bacteriol.">
        <title>The genome of the obligately intracellular bacterium Ehrlichia canis reveals themes of complex membrane structure and immune evasion strategies.</title>
        <authorList>
            <person name="Mavromatis K."/>
            <person name="Doyle C.K."/>
            <person name="Lykidis A."/>
            <person name="Ivanova N."/>
            <person name="Francino M.P."/>
            <person name="Chain P."/>
            <person name="Shin M."/>
            <person name="Malfatti S."/>
            <person name="Larimer F."/>
            <person name="Copeland A."/>
            <person name="Detter J.C."/>
            <person name="Land M."/>
            <person name="Richardson P.M."/>
            <person name="Yu X.J."/>
            <person name="Walker D.H."/>
            <person name="McBride J.W."/>
            <person name="Kyrpides N.C."/>
        </authorList>
    </citation>
    <scope>NUCLEOTIDE SEQUENCE [LARGE SCALE GENOMIC DNA]</scope>
    <source>
        <strain>Jake</strain>
    </source>
</reference>
<gene>
    <name evidence="1" type="primary">rpsE</name>
    <name type="ordered locus">Ecaj_0595</name>
</gene>
<proteinExistence type="inferred from homology"/>